<dbReference type="EMBL" id="AB040527">
    <property type="protein sequence ID" value="BAB33378.1"/>
    <property type="molecule type" value="mRNA"/>
</dbReference>
<dbReference type="EMBL" id="AB040528">
    <property type="protein sequence ID" value="BAB33379.1"/>
    <property type="molecule type" value="mRNA"/>
</dbReference>
<dbReference type="EMBL" id="AB040529">
    <property type="protein sequence ID" value="BAB33380.1"/>
    <property type="molecule type" value="mRNA"/>
</dbReference>
<dbReference type="EMBL" id="AB056059">
    <property type="protein sequence ID" value="BAB61778.1"/>
    <property type="molecule type" value="Genomic_DNA"/>
</dbReference>
<dbReference type="EMBL" id="AB056059">
    <property type="protein sequence ID" value="BAB61779.1"/>
    <property type="molecule type" value="Genomic_DNA"/>
</dbReference>
<dbReference type="EMBL" id="AB056059">
    <property type="protein sequence ID" value="BAB61780.1"/>
    <property type="molecule type" value="Genomic_DNA"/>
</dbReference>
<dbReference type="EMBL" id="AL136582">
    <property type="protein sequence ID" value="CAB66517.1"/>
    <property type="molecule type" value="mRNA"/>
</dbReference>
<dbReference type="EMBL" id="AB058762">
    <property type="protein sequence ID" value="BAB47488.2"/>
    <property type="status" value="ALT_INIT"/>
    <property type="molecule type" value="mRNA"/>
</dbReference>
<dbReference type="EMBL" id="AK289458">
    <property type="protein sequence ID" value="BAF82147.1"/>
    <property type="molecule type" value="mRNA"/>
</dbReference>
<dbReference type="EMBL" id="AL928717">
    <property type="status" value="NOT_ANNOTATED_CDS"/>
    <property type="molecule type" value="Genomic_DNA"/>
</dbReference>
<dbReference type="EMBL" id="BX537154">
    <property type="protein sequence ID" value="CAI41307.1"/>
    <property type="molecule type" value="Genomic_DNA"/>
</dbReference>
<dbReference type="EMBL" id="CH471230">
    <property type="protein sequence ID" value="EAW62885.1"/>
    <property type="molecule type" value="Genomic_DNA"/>
</dbReference>
<dbReference type="EMBL" id="BC001207">
    <property type="protein sequence ID" value="AAH01207.1"/>
    <property type="status" value="ALT_INIT"/>
    <property type="molecule type" value="mRNA"/>
</dbReference>
<dbReference type="EMBL" id="BC063838">
    <property type="protein sequence ID" value="AAH63838.1"/>
    <property type="molecule type" value="mRNA"/>
</dbReference>
<dbReference type="EMBL" id="BC081566">
    <property type="protein sequence ID" value="AAH81566.1"/>
    <property type="molecule type" value="mRNA"/>
</dbReference>
<dbReference type="EMBL" id="AF329733">
    <property type="protein sequence ID" value="AAL50032.1"/>
    <property type="status" value="ALT_FRAME"/>
    <property type="molecule type" value="mRNA"/>
</dbReference>
<dbReference type="EMBL" id="AF320908">
    <property type="protein sequence ID" value="AAG38604.1"/>
    <property type="molecule type" value="mRNA"/>
</dbReference>
<dbReference type="CCDS" id="CCDS14338.1">
    <molecule id="Q96JG8-1"/>
</dbReference>
<dbReference type="CCDS" id="CCDS35281.1">
    <molecule id="Q96JG8-2"/>
</dbReference>
<dbReference type="CCDS" id="CCDS48116.1">
    <molecule id="Q96JG8-2"/>
</dbReference>
<dbReference type="CCDS" id="CCDS56602.1">
    <molecule id="Q96JG8-4"/>
</dbReference>
<dbReference type="CCDS" id="CCDS65261.1">
    <molecule id="Q96JG8-4"/>
</dbReference>
<dbReference type="CCDS" id="CCDS94608.1">
    <molecule id="Q96JG8-1"/>
</dbReference>
<dbReference type="RefSeq" id="NP_001092270.1">
    <molecule id="Q96JG8-2"/>
    <property type="nucleotide sequence ID" value="NM_001098800.3"/>
</dbReference>
<dbReference type="RefSeq" id="NP_001229291.1">
    <molecule id="Q96JG8-4"/>
    <property type="nucleotide sequence ID" value="NM_001242362.1"/>
</dbReference>
<dbReference type="RefSeq" id="NP_001258990.1">
    <molecule id="Q96JG8-4"/>
    <property type="nucleotide sequence ID" value="NM_001272061.2"/>
</dbReference>
<dbReference type="RefSeq" id="NP_001258991.1">
    <molecule id="Q96JG8-1"/>
    <property type="nucleotide sequence ID" value="NM_001272062.2"/>
</dbReference>
<dbReference type="RefSeq" id="NP_001258992.1">
    <molecule id="Q96JG8-1"/>
    <property type="nucleotide sequence ID" value="NM_001272063.2"/>
</dbReference>
<dbReference type="RefSeq" id="NP_110428.2">
    <molecule id="Q96JG8-1"/>
    <property type="nucleotide sequence ID" value="NM_030801.3"/>
</dbReference>
<dbReference type="RefSeq" id="NP_803879.1">
    <molecule id="Q96JG8-1"/>
    <property type="nucleotide sequence ID" value="NM_177535.2"/>
</dbReference>
<dbReference type="RefSeq" id="NP_803881.1">
    <molecule id="Q96JG8-2"/>
    <property type="nucleotide sequence ID" value="NM_177537.2"/>
</dbReference>
<dbReference type="RefSeq" id="XP_006724670.1">
    <property type="nucleotide sequence ID" value="XM_006724607.3"/>
</dbReference>
<dbReference type="RefSeq" id="XP_006724671.1">
    <property type="nucleotide sequence ID" value="XM_006724608.3"/>
</dbReference>
<dbReference type="RefSeq" id="XP_011529124.1">
    <property type="nucleotide sequence ID" value="XM_011530822.1"/>
</dbReference>
<dbReference type="RefSeq" id="XP_016885365.1">
    <property type="nucleotide sequence ID" value="XM_017029876.1"/>
</dbReference>
<dbReference type="SMR" id="Q96JG8"/>
<dbReference type="BioGRID" id="123521">
    <property type="interactions" value="24"/>
</dbReference>
<dbReference type="BioGRID" id="608671">
    <property type="interactions" value="10"/>
</dbReference>
<dbReference type="FunCoup" id="Q96JG8">
    <property type="interactions" value="71"/>
</dbReference>
<dbReference type="IntAct" id="Q96JG8">
    <property type="interactions" value="25"/>
</dbReference>
<dbReference type="MINT" id="Q96JG8"/>
<dbReference type="STRING" id="9606.ENSP00000421861"/>
<dbReference type="GlyGen" id="Q96JG8">
    <property type="glycosylation" value="1 site"/>
</dbReference>
<dbReference type="iPTMnet" id="Q96JG8"/>
<dbReference type="PhosphoSitePlus" id="Q96JG8"/>
<dbReference type="BioMuta" id="MAGED4B"/>
<dbReference type="DMDM" id="41017391"/>
<dbReference type="jPOST" id="Q96JG8"/>
<dbReference type="MassIVE" id="Q96JG8"/>
<dbReference type="PaxDb" id="9606-ENSP00000421861"/>
<dbReference type="PeptideAtlas" id="Q96JG8"/>
<dbReference type="ProteomicsDB" id="76958">
    <molecule id="Q96JG8-1"/>
</dbReference>
<dbReference type="ProteomicsDB" id="76959">
    <molecule id="Q96JG8-2"/>
</dbReference>
<dbReference type="ProteomicsDB" id="76960">
    <molecule id="Q96JG8-3"/>
</dbReference>
<dbReference type="ProteomicsDB" id="76961">
    <molecule id="Q96JG8-4"/>
</dbReference>
<dbReference type="Antibodypedia" id="1173">
    <property type="antibodies" value="67 antibodies from 16 providers"/>
</dbReference>
<dbReference type="Antibodypedia" id="26378">
    <property type="antibodies" value="24 antibodies from 8 providers"/>
</dbReference>
<dbReference type="DNASU" id="81557"/>
<dbReference type="Ensembl" id="ENST00000335504.10">
    <molecule id="Q96JG8-1"/>
    <property type="protein sequence ID" value="ENSP00000335385.5"/>
    <property type="gene ID" value="ENSG00000187243.17"/>
</dbReference>
<dbReference type="Ensembl" id="ENST00000360134.10">
    <molecule id="Q96JG8-2"/>
    <property type="protein sequence ID" value="ENSP00000353252.6"/>
    <property type="gene ID" value="ENSG00000187243.17"/>
</dbReference>
<dbReference type="Ensembl" id="ENST00000375626.7">
    <molecule id="Q96JG8-2"/>
    <property type="protein sequence ID" value="ENSP00000364777.3"/>
    <property type="gene ID" value="ENSG00000154545.17"/>
</dbReference>
<dbReference type="Ensembl" id="ENST00000471932.6">
    <molecule id="Q96JG8-1"/>
    <property type="protein sequence ID" value="ENSP00000507908.1"/>
    <property type="gene ID" value="ENSG00000154545.17"/>
</dbReference>
<dbReference type="Ensembl" id="ENST00000485287.5">
    <molecule id="Q96JG8-4"/>
    <property type="protein sequence ID" value="ENSP00000421861.1"/>
    <property type="gene ID" value="ENSG00000187243.17"/>
</dbReference>
<dbReference type="Ensembl" id="ENST00000497164.5">
    <molecule id="Q96JG8-1"/>
    <property type="protein sequence ID" value="ENSP00000423848.1"/>
    <property type="gene ID" value="ENSG00000187243.17"/>
</dbReference>
<dbReference type="Ensembl" id="ENST00000599522.7">
    <molecule id="Q96JG8-4"/>
    <property type="protein sequence ID" value="ENSP00000472118.2"/>
    <property type="gene ID" value="ENSG00000154545.17"/>
</dbReference>
<dbReference type="GeneID" id="728239"/>
<dbReference type="GeneID" id="81557"/>
<dbReference type="KEGG" id="hsa:728239"/>
<dbReference type="KEGG" id="hsa:81557"/>
<dbReference type="MANE-Select" id="ENST00000335504.10">
    <property type="protein sequence ID" value="ENSP00000335385.5"/>
    <property type="RefSeq nucleotide sequence ID" value="NM_030801.5"/>
    <property type="RefSeq protein sequence ID" value="NP_110428.2"/>
</dbReference>
<dbReference type="MANE-Select" id="ENST00000471932.6">
    <property type="protein sequence ID" value="ENSP00000507908.1"/>
    <property type="RefSeq nucleotide sequence ID" value="NM_001272063.2"/>
    <property type="RefSeq protein sequence ID" value="NP_001258992.1"/>
</dbReference>
<dbReference type="UCSC" id="uc004dpr.5">
    <molecule id="Q96JG8-1"/>
    <property type="organism name" value="human"/>
</dbReference>
<dbReference type="AGR" id="HGNC:22880"/>
<dbReference type="AGR" id="HGNC:23793"/>
<dbReference type="CTD" id="728239"/>
<dbReference type="CTD" id="81557"/>
<dbReference type="DisGeNET" id="728239"/>
<dbReference type="DisGeNET" id="81557"/>
<dbReference type="GeneCards" id="MAGED4"/>
<dbReference type="GeneCards" id="MAGED4B"/>
<dbReference type="HGNC" id="HGNC:23793">
    <property type="gene designation" value="MAGED4"/>
</dbReference>
<dbReference type="HGNC" id="HGNC:22880">
    <property type="gene designation" value="MAGED4B"/>
</dbReference>
<dbReference type="HPA" id="ENSG00000154545">
    <property type="expression patterns" value="Tissue enhanced (brain, ovary)"/>
</dbReference>
<dbReference type="HPA" id="ENSG00000187243">
    <property type="expression patterns" value="Tissue enhanced (brain, pituitary gland)"/>
</dbReference>
<dbReference type="MIM" id="300702">
    <property type="type" value="gene"/>
</dbReference>
<dbReference type="MIM" id="300765">
    <property type="type" value="gene"/>
</dbReference>
<dbReference type="neXtProt" id="NX_Q96JG8"/>
<dbReference type="OpenTargets" id="ENSG00000154545"/>
<dbReference type="PharmGKB" id="PA145148472"/>
<dbReference type="VEuPathDB" id="HostDB:ENSG00000154545"/>
<dbReference type="VEuPathDB" id="HostDB:ENSG00000187243"/>
<dbReference type="eggNOG" id="KOG4562">
    <property type="taxonomic scope" value="Eukaryota"/>
</dbReference>
<dbReference type="GeneTree" id="ENSGT00940000162389"/>
<dbReference type="HOGENOM" id="CLU_370025_0_0_1"/>
<dbReference type="InParanoid" id="Q96JG8"/>
<dbReference type="OMA" id="AEPWTRM"/>
<dbReference type="OrthoDB" id="205198at2759"/>
<dbReference type="PAN-GO" id="Q96JG8">
    <property type="GO annotations" value="2 GO annotations based on evolutionary models"/>
</dbReference>
<dbReference type="PhylomeDB" id="Q96JG8"/>
<dbReference type="TreeFam" id="TF352132"/>
<dbReference type="PathwayCommons" id="Q96JG8"/>
<dbReference type="SignaLink" id="Q96JG8"/>
<dbReference type="BioGRID-ORCS" id="728239">
    <property type="hits" value="74 hits in 639 CRISPR screens"/>
</dbReference>
<dbReference type="BioGRID-ORCS" id="81557">
    <property type="hits" value="38 hits in 643 CRISPR screens"/>
</dbReference>
<dbReference type="ChiTaRS" id="MAGED4">
    <property type="organism name" value="human"/>
</dbReference>
<dbReference type="GeneWiki" id="MAGED4B"/>
<dbReference type="Pharos" id="Q96JG8">
    <property type="development level" value="Tbio"/>
</dbReference>
<dbReference type="PRO" id="PR:Q96JG8"/>
<dbReference type="Proteomes" id="UP000005640">
    <property type="component" value="Chromosome X"/>
</dbReference>
<dbReference type="RNAct" id="Q96JG8">
    <property type="molecule type" value="protein"/>
</dbReference>
<dbReference type="Bgee" id="ENSG00000154545">
    <property type="expression patterns" value="Expressed in cortical plate and 97 other cell types or tissues"/>
</dbReference>
<dbReference type="ExpressionAtlas" id="Q96JG8">
    <property type="expression patterns" value="baseline and differential"/>
</dbReference>
<dbReference type="GO" id="GO:0005634">
    <property type="term" value="C:nucleus"/>
    <property type="evidence" value="ECO:0000318"/>
    <property type="project" value="GO_Central"/>
</dbReference>
<dbReference type="GO" id="GO:0000122">
    <property type="term" value="P:negative regulation of transcription by RNA polymerase II"/>
    <property type="evidence" value="ECO:0000318"/>
    <property type="project" value="GO_Central"/>
</dbReference>
<dbReference type="FunFam" id="1.10.10.1200:FF:000001">
    <property type="entry name" value="Melanoma-associated antigen D1"/>
    <property type="match status" value="1"/>
</dbReference>
<dbReference type="FunFam" id="1.10.10.1210:FF:000001">
    <property type="entry name" value="melanoma-associated antigen D1"/>
    <property type="match status" value="1"/>
</dbReference>
<dbReference type="Gene3D" id="1.10.10.1200">
    <property type="entry name" value="MAGE homology domain, winged helix WH1 motif"/>
    <property type="match status" value="1"/>
</dbReference>
<dbReference type="Gene3D" id="1.10.10.1210">
    <property type="entry name" value="MAGE homology domain, winged helix WH2 motif"/>
    <property type="match status" value="1"/>
</dbReference>
<dbReference type="InterPro" id="IPR037445">
    <property type="entry name" value="MAGE"/>
</dbReference>
<dbReference type="InterPro" id="IPR041898">
    <property type="entry name" value="MAGE_WH1"/>
</dbReference>
<dbReference type="InterPro" id="IPR041899">
    <property type="entry name" value="MAGE_WH2"/>
</dbReference>
<dbReference type="InterPro" id="IPR002190">
    <property type="entry name" value="MHD_dom"/>
</dbReference>
<dbReference type="PANTHER" id="PTHR11736:SF37">
    <property type="entry name" value="MELANOMA-ASSOCIATED ANTIGEN D4"/>
    <property type="match status" value="1"/>
</dbReference>
<dbReference type="PANTHER" id="PTHR11736">
    <property type="entry name" value="MELANOMA-ASSOCIATED ANTIGEN MAGE ANTIGEN"/>
    <property type="match status" value="1"/>
</dbReference>
<dbReference type="Pfam" id="PF01454">
    <property type="entry name" value="MAGE"/>
    <property type="match status" value="1"/>
</dbReference>
<dbReference type="SMART" id="SM01373">
    <property type="entry name" value="MAGE"/>
    <property type="match status" value="1"/>
</dbReference>
<dbReference type="PROSITE" id="PS50838">
    <property type="entry name" value="MAGE"/>
    <property type="match status" value="1"/>
</dbReference>
<comment type="function">
    <text evidence="5">May enhance ubiquitin ligase activity of RING-type zinc finger-containing E3 ubiquitin-protein ligases. Proposed to act through recruitment and/or stabilization of the Ubl-conjugating enzyme (E2) at the E3:substrate complex.</text>
</comment>
<comment type="subunit">
    <text evidence="5">Interacts with TRIM27.</text>
</comment>
<comment type="interaction">
    <interactant intactId="EBI-721864">
        <id>Q96JG8</id>
    </interactant>
    <interactant intactId="EBI-946825">
        <id>Q8N111</id>
        <label>CEND1</label>
    </interactant>
    <organismsDiffer>false</organismsDiffer>
    <experiments>3</experiments>
</comment>
<comment type="interaction">
    <interactant intactId="EBI-721864">
        <id>Q96JG8</id>
    </interactant>
    <interactant intactId="EBI-12845222">
        <id>Q9NVL1-2</id>
        <label>FAM86C1P</label>
    </interactant>
    <organismsDiffer>false</organismsDiffer>
    <experiments>3</experiments>
</comment>
<comment type="interaction">
    <interactant intactId="EBI-721864">
        <id>Q96JG8</id>
    </interactant>
    <interactant intactId="EBI-6509505">
        <id>Q0VD86</id>
        <label>INCA1</label>
    </interactant>
    <organismsDiffer>false</organismsDiffer>
    <experiments>3</experiments>
</comment>
<comment type="interaction">
    <interactant intactId="EBI-721864">
        <id>Q96JG8</id>
    </interactant>
    <interactant intactId="EBI-11911016">
        <id>P80188</id>
        <label>LCN2</label>
    </interactant>
    <organismsDiffer>false</organismsDiffer>
    <experiments>3</experiments>
</comment>
<comment type="alternative products">
    <event type="alternative splicing"/>
    <isoform>
        <id>Q96JG8-1</id>
        <name>1</name>
        <name>MAGE-E1a</name>
        <sequence type="displayed"/>
    </isoform>
    <isoform>
        <id>Q96JG8-2</id>
        <name>2</name>
        <name>MAGE-E1b</name>
        <sequence type="described" ref="VSP_009287"/>
    </isoform>
    <isoform>
        <id>Q96JG8-3</id>
        <name>3</name>
        <name>MAGE-E1c</name>
        <sequence type="described" ref="VSP_009288 VSP_009289"/>
    </isoform>
    <isoform>
        <id>Q96JG8-4</id>
        <name>4</name>
        <sequence type="described" ref="VSP_035013"/>
    </isoform>
</comment>
<comment type="tissue specificity">
    <text evidence="3 4">Expressed only in brain and ovary among normal tissues. Isoform 1 and isoform 2 are specifically expressed in glioma cells among cancer cells. Detected in some renal cell carcinoma samples.</text>
</comment>
<comment type="sequence caution" evidence="8">
    <conflict type="erroneous initiation">
        <sequence resource="EMBL-CDS" id="AAH01207"/>
    </conflict>
</comment>
<comment type="sequence caution" evidence="8">
    <conflict type="frameshift">
        <sequence resource="EMBL-CDS" id="AAL50032"/>
    </conflict>
</comment>
<comment type="sequence caution" evidence="8">
    <conflict type="erroneous initiation">
        <sequence resource="EMBL-CDS" id="BAB47488"/>
    </conflict>
</comment>
<reference key="1">
    <citation type="journal article" date="2001" name="Cancer Res.">
        <title>MAGE-E1, a new member of the melanoma-associated antigen gene family and its expression in human glioma.</title>
        <authorList>
            <person name="Sasaki M."/>
            <person name="Nakahira K."/>
            <person name="Kawano Y."/>
            <person name="Katakura H."/>
            <person name="Yoshimine T."/>
            <person name="Shimizu K."/>
            <person name="Kim S.U."/>
            <person name="Ikenaka K."/>
        </authorList>
    </citation>
    <scope>NUCLEOTIDE SEQUENCE [MRNA] (ISOFORMS 1; 2 AND 3)</scope>
    <scope>TISSUE SPECIFICITY</scope>
</reference>
<reference key="2">
    <citation type="journal article" date="2001" name="Gene">
        <title>Structural characterization and chromosomal localization of the MAGE-E1 gene.</title>
        <authorList>
            <person name="Kawano Y."/>
            <person name="Sasaki M."/>
            <person name="Nakahira K."/>
            <person name="Yoshimine T."/>
            <person name="Shimizu K."/>
            <person name="Wada H."/>
            <person name="Ikenaka K."/>
        </authorList>
    </citation>
    <scope>NUCLEOTIDE SEQUENCE [GENOMIC DNA] (ISOFORMS 1; 2 AND 3)</scope>
</reference>
<reference key="3">
    <citation type="journal article" date="2001" name="Genome Res.">
        <title>Towards a catalog of human genes and proteins: sequencing and analysis of 500 novel complete protein coding human cDNAs.</title>
        <authorList>
            <person name="Wiemann S."/>
            <person name="Weil B."/>
            <person name="Wellenreuther R."/>
            <person name="Gassenhuber J."/>
            <person name="Glassl S."/>
            <person name="Ansorge W."/>
            <person name="Boecher M."/>
            <person name="Bloecker H."/>
            <person name="Bauersachs S."/>
            <person name="Blum H."/>
            <person name="Lauber J."/>
            <person name="Duesterhoeft A."/>
            <person name="Beyer A."/>
            <person name="Koehrer K."/>
            <person name="Strack N."/>
            <person name="Mewes H.-W."/>
            <person name="Ottenwaelder B."/>
            <person name="Obermaier B."/>
            <person name="Tampe J."/>
            <person name="Heubner D."/>
            <person name="Wambutt R."/>
            <person name="Korn B."/>
            <person name="Klein M."/>
            <person name="Poustka A."/>
        </authorList>
    </citation>
    <scope>NUCLEOTIDE SEQUENCE [LARGE SCALE MRNA] (ISOFORM 1)</scope>
    <source>
        <tissue>Amygdala</tissue>
    </source>
</reference>
<reference key="4">
    <citation type="journal article" date="2001" name="DNA Res.">
        <title>Prediction of the coding sequences of unidentified human genes. XX. The complete sequences of 100 new cDNA clones from brain which code for large proteins in vitro.</title>
        <authorList>
            <person name="Nagase T."/>
            <person name="Nakayama M."/>
            <person name="Nakajima D."/>
            <person name="Kikuno R."/>
            <person name="Ohara O."/>
        </authorList>
    </citation>
    <scope>NUCLEOTIDE SEQUENCE [LARGE SCALE MRNA] (ISOFORM 1)</scope>
    <source>
        <tissue>Brain</tissue>
    </source>
</reference>
<reference key="5">
    <citation type="journal article" date="2002" name="DNA Res.">
        <title>Construction of expression-ready cDNA clones for KIAA genes: manual curation of 330 KIAA cDNA clones.</title>
        <authorList>
            <person name="Nakajima D."/>
            <person name="Okazaki N."/>
            <person name="Yamakawa H."/>
            <person name="Kikuno R."/>
            <person name="Ohara O."/>
            <person name="Nagase T."/>
        </authorList>
    </citation>
    <scope>SEQUENCE REVISION</scope>
</reference>
<reference key="6">
    <citation type="journal article" date="2004" name="Nat. Genet.">
        <title>Complete sequencing and characterization of 21,243 full-length human cDNAs.</title>
        <authorList>
            <person name="Ota T."/>
            <person name="Suzuki Y."/>
            <person name="Nishikawa T."/>
            <person name="Otsuki T."/>
            <person name="Sugiyama T."/>
            <person name="Irie R."/>
            <person name="Wakamatsu A."/>
            <person name="Hayashi K."/>
            <person name="Sato H."/>
            <person name="Nagai K."/>
            <person name="Kimura K."/>
            <person name="Makita H."/>
            <person name="Sekine M."/>
            <person name="Obayashi M."/>
            <person name="Nishi T."/>
            <person name="Shibahara T."/>
            <person name="Tanaka T."/>
            <person name="Ishii S."/>
            <person name="Yamamoto J."/>
            <person name="Saito K."/>
            <person name="Kawai Y."/>
            <person name="Isono Y."/>
            <person name="Nakamura Y."/>
            <person name="Nagahari K."/>
            <person name="Murakami K."/>
            <person name="Yasuda T."/>
            <person name="Iwayanagi T."/>
            <person name="Wagatsuma M."/>
            <person name="Shiratori A."/>
            <person name="Sudo H."/>
            <person name="Hosoiri T."/>
            <person name="Kaku Y."/>
            <person name="Kodaira H."/>
            <person name="Kondo H."/>
            <person name="Sugawara M."/>
            <person name="Takahashi M."/>
            <person name="Kanda K."/>
            <person name="Yokoi T."/>
            <person name="Furuya T."/>
            <person name="Kikkawa E."/>
            <person name="Omura Y."/>
            <person name="Abe K."/>
            <person name="Kamihara K."/>
            <person name="Katsuta N."/>
            <person name="Sato K."/>
            <person name="Tanikawa M."/>
            <person name="Yamazaki M."/>
            <person name="Ninomiya K."/>
            <person name="Ishibashi T."/>
            <person name="Yamashita H."/>
            <person name="Murakawa K."/>
            <person name="Fujimori K."/>
            <person name="Tanai H."/>
            <person name="Kimata M."/>
            <person name="Watanabe M."/>
            <person name="Hiraoka S."/>
            <person name="Chiba Y."/>
            <person name="Ishida S."/>
            <person name="Ono Y."/>
            <person name="Takiguchi S."/>
            <person name="Watanabe S."/>
            <person name="Yosida M."/>
            <person name="Hotuta T."/>
            <person name="Kusano J."/>
            <person name="Kanehori K."/>
            <person name="Takahashi-Fujii A."/>
            <person name="Hara H."/>
            <person name="Tanase T.-O."/>
            <person name="Nomura Y."/>
            <person name="Togiya S."/>
            <person name="Komai F."/>
            <person name="Hara R."/>
            <person name="Takeuchi K."/>
            <person name="Arita M."/>
            <person name="Imose N."/>
            <person name="Musashino K."/>
            <person name="Yuuki H."/>
            <person name="Oshima A."/>
            <person name="Sasaki N."/>
            <person name="Aotsuka S."/>
            <person name="Yoshikawa Y."/>
            <person name="Matsunawa H."/>
            <person name="Ichihara T."/>
            <person name="Shiohata N."/>
            <person name="Sano S."/>
            <person name="Moriya S."/>
            <person name="Momiyama H."/>
            <person name="Satoh N."/>
            <person name="Takami S."/>
            <person name="Terashima Y."/>
            <person name="Suzuki O."/>
            <person name="Nakagawa S."/>
            <person name="Senoh A."/>
            <person name="Mizoguchi H."/>
            <person name="Goto Y."/>
            <person name="Shimizu F."/>
            <person name="Wakebe H."/>
            <person name="Hishigaki H."/>
            <person name="Watanabe T."/>
            <person name="Sugiyama A."/>
            <person name="Takemoto M."/>
            <person name="Kawakami B."/>
            <person name="Yamazaki M."/>
            <person name="Watanabe K."/>
            <person name="Kumagai A."/>
            <person name="Itakura S."/>
            <person name="Fukuzumi Y."/>
            <person name="Fujimori Y."/>
            <person name="Komiyama M."/>
            <person name="Tashiro H."/>
            <person name="Tanigami A."/>
            <person name="Fujiwara T."/>
            <person name="Ono T."/>
            <person name="Yamada K."/>
            <person name="Fujii Y."/>
            <person name="Ozaki K."/>
            <person name="Hirao M."/>
            <person name="Ohmori Y."/>
            <person name="Kawabata A."/>
            <person name="Hikiji T."/>
            <person name="Kobatake N."/>
            <person name="Inagaki H."/>
            <person name="Ikema Y."/>
            <person name="Okamoto S."/>
            <person name="Okitani R."/>
            <person name="Kawakami T."/>
            <person name="Noguchi S."/>
            <person name="Itoh T."/>
            <person name="Shigeta K."/>
            <person name="Senba T."/>
            <person name="Matsumura K."/>
            <person name="Nakajima Y."/>
            <person name="Mizuno T."/>
            <person name="Morinaga M."/>
            <person name="Sasaki M."/>
            <person name="Togashi T."/>
            <person name="Oyama M."/>
            <person name="Hata H."/>
            <person name="Watanabe M."/>
            <person name="Komatsu T."/>
            <person name="Mizushima-Sugano J."/>
            <person name="Satoh T."/>
            <person name="Shirai Y."/>
            <person name="Takahashi Y."/>
            <person name="Nakagawa K."/>
            <person name="Okumura K."/>
            <person name="Nagase T."/>
            <person name="Nomura N."/>
            <person name="Kikuchi H."/>
            <person name="Masuho Y."/>
            <person name="Yamashita R."/>
            <person name="Nakai K."/>
            <person name="Yada T."/>
            <person name="Nakamura Y."/>
            <person name="Ohara O."/>
            <person name="Isogai T."/>
            <person name="Sugano S."/>
        </authorList>
    </citation>
    <scope>NUCLEOTIDE SEQUENCE [LARGE SCALE MRNA]</scope>
</reference>
<reference key="7">
    <citation type="journal article" date="2005" name="Nature">
        <title>The DNA sequence of the human X chromosome.</title>
        <authorList>
            <person name="Ross M.T."/>
            <person name="Grafham D.V."/>
            <person name="Coffey A.J."/>
            <person name="Scherer S."/>
            <person name="McLay K."/>
            <person name="Muzny D."/>
            <person name="Platzer M."/>
            <person name="Howell G.R."/>
            <person name="Burrows C."/>
            <person name="Bird C.P."/>
            <person name="Frankish A."/>
            <person name="Lovell F.L."/>
            <person name="Howe K.L."/>
            <person name="Ashurst J.L."/>
            <person name="Fulton R.S."/>
            <person name="Sudbrak R."/>
            <person name="Wen G."/>
            <person name="Jones M.C."/>
            <person name="Hurles M.E."/>
            <person name="Andrews T.D."/>
            <person name="Scott C.E."/>
            <person name="Searle S."/>
            <person name="Ramser J."/>
            <person name="Whittaker A."/>
            <person name="Deadman R."/>
            <person name="Carter N.P."/>
            <person name="Hunt S.E."/>
            <person name="Chen R."/>
            <person name="Cree A."/>
            <person name="Gunaratne P."/>
            <person name="Havlak P."/>
            <person name="Hodgson A."/>
            <person name="Metzker M.L."/>
            <person name="Richards S."/>
            <person name="Scott G."/>
            <person name="Steffen D."/>
            <person name="Sodergren E."/>
            <person name="Wheeler D.A."/>
            <person name="Worley K.C."/>
            <person name="Ainscough R."/>
            <person name="Ambrose K.D."/>
            <person name="Ansari-Lari M.A."/>
            <person name="Aradhya S."/>
            <person name="Ashwell R.I."/>
            <person name="Babbage A.K."/>
            <person name="Bagguley C.L."/>
            <person name="Ballabio A."/>
            <person name="Banerjee R."/>
            <person name="Barker G.E."/>
            <person name="Barlow K.F."/>
            <person name="Barrett I.P."/>
            <person name="Bates K.N."/>
            <person name="Beare D.M."/>
            <person name="Beasley H."/>
            <person name="Beasley O."/>
            <person name="Beck A."/>
            <person name="Bethel G."/>
            <person name="Blechschmidt K."/>
            <person name="Brady N."/>
            <person name="Bray-Allen S."/>
            <person name="Bridgeman A.M."/>
            <person name="Brown A.J."/>
            <person name="Brown M.J."/>
            <person name="Bonnin D."/>
            <person name="Bruford E.A."/>
            <person name="Buhay C."/>
            <person name="Burch P."/>
            <person name="Burford D."/>
            <person name="Burgess J."/>
            <person name="Burrill W."/>
            <person name="Burton J."/>
            <person name="Bye J.M."/>
            <person name="Carder C."/>
            <person name="Carrel L."/>
            <person name="Chako J."/>
            <person name="Chapman J.C."/>
            <person name="Chavez D."/>
            <person name="Chen E."/>
            <person name="Chen G."/>
            <person name="Chen Y."/>
            <person name="Chen Z."/>
            <person name="Chinault C."/>
            <person name="Ciccodicola A."/>
            <person name="Clark S.Y."/>
            <person name="Clarke G."/>
            <person name="Clee C.M."/>
            <person name="Clegg S."/>
            <person name="Clerc-Blankenburg K."/>
            <person name="Clifford K."/>
            <person name="Cobley V."/>
            <person name="Cole C.G."/>
            <person name="Conquer J.S."/>
            <person name="Corby N."/>
            <person name="Connor R.E."/>
            <person name="David R."/>
            <person name="Davies J."/>
            <person name="Davis C."/>
            <person name="Davis J."/>
            <person name="Delgado O."/>
            <person name="Deshazo D."/>
            <person name="Dhami P."/>
            <person name="Ding Y."/>
            <person name="Dinh H."/>
            <person name="Dodsworth S."/>
            <person name="Draper H."/>
            <person name="Dugan-Rocha S."/>
            <person name="Dunham A."/>
            <person name="Dunn M."/>
            <person name="Durbin K.J."/>
            <person name="Dutta I."/>
            <person name="Eades T."/>
            <person name="Ellwood M."/>
            <person name="Emery-Cohen A."/>
            <person name="Errington H."/>
            <person name="Evans K.L."/>
            <person name="Faulkner L."/>
            <person name="Francis F."/>
            <person name="Frankland J."/>
            <person name="Fraser A.E."/>
            <person name="Galgoczy P."/>
            <person name="Gilbert J."/>
            <person name="Gill R."/>
            <person name="Gloeckner G."/>
            <person name="Gregory S.G."/>
            <person name="Gribble S."/>
            <person name="Griffiths C."/>
            <person name="Grocock R."/>
            <person name="Gu Y."/>
            <person name="Gwilliam R."/>
            <person name="Hamilton C."/>
            <person name="Hart E.A."/>
            <person name="Hawes A."/>
            <person name="Heath P.D."/>
            <person name="Heitmann K."/>
            <person name="Hennig S."/>
            <person name="Hernandez J."/>
            <person name="Hinzmann B."/>
            <person name="Ho S."/>
            <person name="Hoffs M."/>
            <person name="Howden P.J."/>
            <person name="Huckle E.J."/>
            <person name="Hume J."/>
            <person name="Hunt P.J."/>
            <person name="Hunt A.R."/>
            <person name="Isherwood J."/>
            <person name="Jacob L."/>
            <person name="Johnson D."/>
            <person name="Jones S."/>
            <person name="de Jong P.J."/>
            <person name="Joseph S.S."/>
            <person name="Keenan S."/>
            <person name="Kelly S."/>
            <person name="Kershaw J.K."/>
            <person name="Khan Z."/>
            <person name="Kioschis P."/>
            <person name="Klages S."/>
            <person name="Knights A.J."/>
            <person name="Kosiura A."/>
            <person name="Kovar-Smith C."/>
            <person name="Laird G.K."/>
            <person name="Langford C."/>
            <person name="Lawlor S."/>
            <person name="Leversha M."/>
            <person name="Lewis L."/>
            <person name="Liu W."/>
            <person name="Lloyd C."/>
            <person name="Lloyd D.M."/>
            <person name="Loulseged H."/>
            <person name="Loveland J.E."/>
            <person name="Lovell J.D."/>
            <person name="Lozado R."/>
            <person name="Lu J."/>
            <person name="Lyne R."/>
            <person name="Ma J."/>
            <person name="Maheshwari M."/>
            <person name="Matthews L.H."/>
            <person name="McDowall J."/>
            <person name="McLaren S."/>
            <person name="McMurray A."/>
            <person name="Meidl P."/>
            <person name="Meitinger T."/>
            <person name="Milne S."/>
            <person name="Miner G."/>
            <person name="Mistry S.L."/>
            <person name="Morgan M."/>
            <person name="Morris S."/>
            <person name="Mueller I."/>
            <person name="Mullikin J.C."/>
            <person name="Nguyen N."/>
            <person name="Nordsiek G."/>
            <person name="Nyakatura G."/>
            <person name="O'dell C.N."/>
            <person name="Okwuonu G."/>
            <person name="Palmer S."/>
            <person name="Pandian R."/>
            <person name="Parker D."/>
            <person name="Parrish J."/>
            <person name="Pasternak S."/>
            <person name="Patel D."/>
            <person name="Pearce A.V."/>
            <person name="Pearson D.M."/>
            <person name="Pelan S.E."/>
            <person name="Perez L."/>
            <person name="Porter K.M."/>
            <person name="Ramsey Y."/>
            <person name="Reichwald K."/>
            <person name="Rhodes S."/>
            <person name="Ridler K.A."/>
            <person name="Schlessinger D."/>
            <person name="Schueler M.G."/>
            <person name="Sehra H.K."/>
            <person name="Shaw-Smith C."/>
            <person name="Shen H."/>
            <person name="Sheridan E.M."/>
            <person name="Shownkeen R."/>
            <person name="Skuce C.D."/>
            <person name="Smith M.L."/>
            <person name="Sotheran E.C."/>
            <person name="Steingruber H.E."/>
            <person name="Steward C.A."/>
            <person name="Storey R."/>
            <person name="Swann R.M."/>
            <person name="Swarbreck D."/>
            <person name="Tabor P.E."/>
            <person name="Taudien S."/>
            <person name="Taylor T."/>
            <person name="Teague B."/>
            <person name="Thomas K."/>
            <person name="Thorpe A."/>
            <person name="Timms K."/>
            <person name="Tracey A."/>
            <person name="Trevanion S."/>
            <person name="Tromans A.C."/>
            <person name="d'Urso M."/>
            <person name="Verduzco D."/>
            <person name="Villasana D."/>
            <person name="Waldron L."/>
            <person name="Wall M."/>
            <person name="Wang Q."/>
            <person name="Warren J."/>
            <person name="Warry G.L."/>
            <person name="Wei X."/>
            <person name="West A."/>
            <person name="Whitehead S.L."/>
            <person name="Whiteley M.N."/>
            <person name="Wilkinson J.E."/>
            <person name="Willey D.L."/>
            <person name="Williams G."/>
            <person name="Williams L."/>
            <person name="Williamson A."/>
            <person name="Williamson H."/>
            <person name="Wilming L."/>
            <person name="Woodmansey R.L."/>
            <person name="Wray P.W."/>
            <person name="Yen J."/>
            <person name="Zhang J."/>
            <person name="Zhou J."/>
            <person name="Zoghbi H."/>
            <person name="Zorilla S."/>
            <person name="Buck D."/>
            <person name="Reinhardt R."/>
            <person name="Poustka A."/>
            <person name="Rosenthal A."/>
            <person name="Lehrach H."/>
            <person name="Meindl A."/>
            <person name="Minx P.J."/>
            <person name="Hillier L.W."/>
            <person name="Willard H.F."/>
            <person name="Wilson R.K."/>
            <person name="Waterston R.H."/>
            <person name="Rice C.M."/>
            <person name="Vaudin M."/>
            <person name="Coulson A."/>
            <person name="Nelson D.L."/>
            <person name="Weinstock G."/>
            <person name="Sulston J.E."/>
            <person name="Durbin R.M."/>
            <person name="Hubbard T."/>
            <person name="Gibbs R.A."/>
            <person name="Beck S."/>
            <person name="Rogers J."/>
            <person name="Bentley D.R."/>
        </authorList>
    </citation>
    <scope>NUCLEOTIDE SEQUENCE [LARGE SCALE GENOMIC DNA]</scope>
</reference>
<reference key="8">
    <citation type="submission" date="2005-07" db="EMBL/GenBank/DDBJ databases">
        <authorList>
            <person name="Mural R.J."/>
            <person name="Istrail S."/>
            <person name="Sutton G.G."/>
            <person name="Florea L."/>
            <person name="Halpern A.L."/>
            <person name="Mobarry C.M."/>
            <person name="Lippert R."/>
            <person name="Walenz B."/>
            <person name="Shatkay H."/>
            <person name="Dew I."/>
            <person name="Miller J.R."/>
            <person name="Flanigan M.J."/>
            <person name="Edwards N.J."/>
            <person name="Bolanos R."/>
            <person name="Fasulo D."/>
            <person name="Halldorsson B.V."/>
            <person name="Hannenhalli S."/>
            <person name="Turner R."/>
            <person name="Yooseph S."/>
            <person name="Lu F."/>
            <person name="Nusskern D.R."/>
            <person name="Shue B.C."/>
            <person name="Zheng X.H."/>
            <person name="Zhong F."/>
            <person name="Delcher A.L."/>
            <person name="Huson D.H."/>
            <person name="Kravitz S.A."/>
            <person name="Mouchard L."/>
            <person name="Reinert K."/>
            <person name="Remington K.A."/>
            <person name="Clark A.G."/>
            <person name="Waterman M.S."/>
            <person name="Eichler E.E."/>
            <person name="Adams M.D."/>
            <person name="Hunkapiller M.W."/>
            <person name="Myers E.W."/>
            <person name="Venter J.C."/>
        </authorList>
    </citation>
    <scope>NUCLEOTIDE SEQUENCE [LARGE SCALE GENOMIC DNA]</scope>
</reference>
<reference key="9">
    <citation type="journal article" date="2004" name="Genome Res.">
        <title>The status, quality, and expansion of the NIH full-length cDNA project: the Mammalian Gene Collection (MGC).</title>
        <authorList>
            <consortium name="The MGC Project Team"/>
        </authorList>
    </citation>
    <scope>NUCLEOTIDE SEQUENCE [LARGE SCALE MRNA] (ISOFORMS 1 AND 4)</scope>
    <source>
        <tissue>Brain</tissue>
        <tissue>Eye</tissue>
        <tissue>PNS</tissue>
    </source>
</reference>
<reference key="10">
    <citation type="submission" date="2000-12" db="EMBL/GenBank/DDBJ databases">
        <title>Identification of a novel member of human Mage-D subfamily genes.</title>
        <authorList>
            <person name="Zhang C."/>
        </authorList>
    </citation>
    <scope>NUCLEOTIDE SEQUENCE [MRNA] OF 60-741</scope>
</reference>
<reference key="11">
    <citation type="submission" date="2000-10" db="EMBL/GenBank/DDBJ databases">
        <title>Identification of new genes of the MAGE family.</title>
        <authorList>
            <person name="Lucas S."/>
            <person name="Boon T."/>
        </authorList>
    </citation>
    <scope>NUCLEOTIDE SEQUENCE [MRNA] OF 497-627</scope>
    <source>
        <tissue>Testis</tissue>
    </source>
</reference>
<reference key="12">
    <citation type="journal article" date="2005" name="Cancer Biol. Ther.">
        <title>MAGED4-expression in renal cell carcinoma and identification of an HLA-A*25-restricted MHC class I ligand from solid tumor tissue.</title>
        <authorList>
            <person name="Kraemer B.F."/>
            <person name="Schoor O."/>
            <person name="Krueger T."/>
            <person name="Reichle C."/>
            <person name="Mueller M."/>
            <person name="Weinschenk T."/>
            <person name="Hennenlotter J."/>
            <person name="Stenzl A."/>
            <person name="Rammensee H.-G."/>
            <person name="Stevanovic S."/>
        </authorList>
    </citation>
    <scope>TISSUE SPECIFICITY</scope>
</reference>
<reference key="13">
    <citation type="journal article" date="2010" name="Mol. Cell">
        <title>MAGE-RING protein complexes comprise a family of E3 ubiquitin ligases.</title>
        <authorList>
            <person name="Doyle J.M."/>
            <person name="Gao J."/>
            <person name="Wang J."/>
            <person name="Yang M."/>
            <person name="Potts P.R."/>
        </authorList>
    </citation>
    <scope>FUNCTION</scope>
    <scope>INTERACTION WITH TRIM27</scope>
</reference>
<organism>
    <name type="scientific">Homo sapiens</name>
    <name type="common">Human</name>
    <dbReference type="NCBI Taxonomy" id="9606"/>
    <lineage>
        <taxon>Eukaryota</taxon>
        <taxon>Metazoa</taxon>
        <taxon>Chordata</taxon>
        <taxon>Craniata</taxon>
        <taxon>Vertebrata</taxon>
        <taxon>Euteleostomi</taxon>
        <taxon>Mammalia</taxon>
        <taxon>Eutheria</taxon>
        <taxon>Euarchontoglires</taxon>
        <taxon>Primates</taxon>
        <taxon>Haplorrhini</taxon>
        <taxon>Catarrhini</taxon>
        <taxon>Hominidae</taxon>
        <taxon>Homo</taxon>
    </lineage>
</organism>
<name>MAGD4_HUMAN</name>
<proteinExistence type="evidence at protein level"/>
<keyword id="KW-0025">Alternative splicing</keyword>
<keyword id="KW-1267">Proteomics identification</keyword>
<keyword id="KW-1185">Reference proteome</keyword>
<keyword id="KW-0825">Tumor antigen</keyword>
<keyword id="KW-0833">Ubl conjugation pathway</keyword>
<sequence length="741" mass="81378">MAEGSFSVQSESYSVEDMDEGSDEVGEEEMVEGNDYEEFGAFGGYGTLTSFDIHILRAFGSLGPGLRILSNEPWELENPVLAQTLVEALQLDPETLANETAARAANVARAAASNRAARAAAAAARTAFSQVVASHRVATPQVSGEDTQPTTYAAEAQGPTPEPPLASPQTSQMLVTSKMAAPEAPATSAQSQTGSPAQEAATEGPSSACAFSQAPCAREVDANRPSTAFLGQNDVFDFTQPAGVSGMAFPRPKRPAPAQEAATEGPSAASGVPQTGPGREVAATRPKTTKSGKALAKTRWVEPQNVVAAAAAKAKMATSIPEPEGAAAATAQHSAEPWARMGGKRTKKSKHLDDEYESSEEERETPAVPPTWRASQPSLTVRAQLAPRPPMAPRSQIPSRHVLCLPPRNVTLLQERANKLVKYLMIKDYKKIPIKRADMLKDVIREYDEHFPEIIERATYTLEKKFGIHLKEIDKEEHLYILVCTRDSSARLLGKTKDTPRLSLLLVILGVIFMNGNRASEAVLWEALRKMGLRPGVRHPFLGDLRKLITDDFVKQKYLEYKKIPNSNPPEYEFLWGLRARHETSKMRVLRFIAQNQNRDPREWKAHFLEAVDDAFKTMDVDMAEEHARAQMRAQMNIGDEALIGRWSWDDIQVELLTWDEDGDFGDAWARIPFAFWARYHQYILNSNRANRRATWRAGVSSGTNGGASTSVLDGPSTSSTIRTRNAARAGASFFSWIQHR</sequence>
<protein>
    <recommendedName>
        <fullName>Melanoma-associated antigen D4</fullName>
    </recommendedName>
    <alternativeName>
        <fullName>MAGE-D4 antigen</fullName>
    </alternativeName>
    <alternativeName>
        <fullName>MAGE-E1 antigen</fullName>
    </alternativeName>
</protein>
<accession>Q96JG8</accession>
<accession>A8K093</accession>
<accession>Q5HYN6</accession>
<accession>Q8WXW4</accession>
<accession>Q9BQ84</accession>
<accession>Q9BVH1</accession>
<accession>Q9BYH3</accession>
<accession>Q9BYH4</accession>
<accession>Q9H217</accession>
<gene>
    <name type="primary">MAGED4</name>
    <name type="synonym">KIAA1859</name>
    <name type="synonym">MAGED4A</name>
    <name type="synonym">MAGEE1</name>
</gene>
<gene>
    <name type="primary">MAGED4B</name>
</gene>
<evidence type="ECO:0000255" key="1">
    <source>
        <dbReference type="PROSITE-ProRule" id="PRU00127"/>
    </source>
</evidence>
<evidence type="ECO:0000256" key="2">
    <source>
        <dbReference type="SAM" id="MobiDB-lite"/>
    </source>
</evidence>
<evidence type="ECO:0000269" key="3">
    <source>
    </source>
</evidence>
<evidence type="ECO:0000269" key="4">
    <source>
    </source>
</evidence>
<evidence type="ECO:0000269" key="5">
    <source>
    </source>
</evidence>
<evidence type="ECO:0000303" key="6">
    <source>
    </source>
</evidence>
<evidence type="ECO:0000303" key="7">
    <source>
    </source>
</evidence>
<evidence type="ECO:0000305" key="8"/>
<feature type="chain" id="PRO_0000156728" description="Melanoma-associated antigen D4">
    <location>
        <begin position="1"/>
        <end position="741"/>
    </location>
</feature>
<feature type="domain" description="MAGE" evidence="1">
    <location>
        <begin position="413"/>
        <end position="611"/>
    </location>
</feature>
<feature type="region of interest" description="Disordered" evidence="2">
    <location>
        <begin position="1"/>
        <end position="27"/>
    </location>
</feature>
<feature type="region of interest" description="Disordered" evidence="2">
    <location>
        <begin position="136"/>
        <end position="206"/>
    </location>
</feature>
<feature type="region of interest" description="Disordered" evidence="2">
    <location>
        <begin position="247"/>
        <end position="296"/>
    </location>
</feature>
<feature type="region of interest" description="Disordered" evidence="2">
    <location>
        <begin position="323"/>
        <end position="379"/>
    </location>
</feature>
<feature type="region of interest" description="Disordered" evidence="2">
    <location>
        <begin position="700"/>
        <end position="720"/>
    </location>
</feature>
<feature type="compositionally biased region" description="Polar residues" evidence="2">
    <location>
        <begin position="1"/>
        <end position="13"/>
    </location>
</feature>
<feature type="compositionally biased region" description="Acidic residues" evidence="2">
    <location>
        <begin position="14"/>
        <end position="27"/>
    </location>
</feature>
<feature type="compositionally biased region" description="Polar residues" evidence="2">
    <location>
        <begin position="140"/>
        <end position="151"/>
    </location>
</feature>
<feature type="compositionally biased region" description="Polar residues" evidence="2">
    <location>
        <begin position="187"/>
        <end position="196"/>
    </location>
</feature>
<feature type="compositionally biased region" description="Acidic residues" evidence="2">
    <location>
        <begin position="354"/>
        <end position="363"/>
    </location>
</feature>
<feature type="compositionally biased region" description="Polar residues" evidence="2">
    <location>
        <begin position="701"/>
        <end position="720"/>
    </location>
</feature>
<feature type="splice variant" id="VSP_009288" description="In isoform 3." evidence="6">
    <original>SKHLDDEYESSEEERETPAVPPTWRASQPSLTVRAQLAPRPPMAPRSQIPSRHVLCLPPRNVTLLQ</original>
    <variation>VRSPCPLPPPHPLAPVLSFSSLSCSSPPSPLPLLPLFSSFPSFSPHLPSPPLLSSQLVHVSPTQVC</variation>
    <location>
        <begin position="349"/>
        <end position="414"/>
    </location>
</feature>
<feature type="splice variant" id="VSP_009289" description="In isoform 3." evidence="6">
    <location>
        <begin position="415"/>
        <end position="741"/>
    </location>
</feature>
<feature type="splice variant" id="VSP_035013" description="In isoform 4." evidence="7">
    <original>K</original>
    <variation>KNPELREETPLSMAPSW</variation>
    <location>
        <position position="557"/>
    </location>
</feature>
<feature type="splice variant" id="VSP_009287" description="In isoform 2." evidence="6">
    <location>
        <begin position="740"/>
        <end position="741"/>
    </location>
</feature>
<feature type="sequence conflict" description="In Ref. 6; BAF82147." evidence="8" ref="6">
    <original>A</original>
    <variation>V</variation>
    <location>
        <position position="314"/>
    </location>
</feature>
<feature type="sequence conflict" description="In Ref. 10." evidence="8" ref="10">
    <original>Q</original>
    <variation>R</variation>
    <location>
        <position position="635"/>
    </location>
</feature>